<comment type="function">
    <text evidence="1">Catalyzes the formation of phosphatidylethanolamine (PtdEtn) from phosphatidylserine (PtdSer).</text>
</comment>
<comment type="catalytic activity">
    <reaction evidence="1">
        <text>a 1,2-diacyl-sn-glycero-3-phospho-L-serine + H(+) = a 1,2-diacyl-sn-glycero-3-phosphoethanolamine + CO2</text>
        <dbReference type="Rhea" id="RHEA:20828"/>
        <dbReference type="ChEBI" id="CHEBI:15378"/>
        <dbReference type="ChEBI" id="CHEBI:16526"/>
        <dbReference type="ChEBI" id="CHEBI:57262"/>
        <dbReference type="ChEBI" id="CHEBI:64612"/>
        <dbReference type="EC" id="4.1.1.65"/>
    </reaction>
</comment>
<comment type="cofactor">
    <cofactor evidence="1">
        <name>pyruvate</name>
        <dbReference type="ChEBI" id="CHEBI:15361"/>
    </cofactor>
    <text evidence="1">Binds 1 pyruvoyl group covalently per subunit.</text>
</comment>
<comment type="pathway">
    <text evidence="1">Phospholipid metabolism; phosphatidylethanolamine biosynthesis; phosphatidylethanolamine from CDP-diacylglycerol: step 2/2.</text>
</comment>
<comment type="subunit">
    <text evidence="1">Heterodimer of a large membrane-associated beta subunit and a small pyruvoyl-containing alpha subunit.</text>
</comment>
<comment type="subcellular location">
    <subcellularLocation>
        <location evidence="1">Cell membrane</location>
        <topology evidence="1">Peripheral membrane protein</topology>
    </subcellularLocation>
</comment>
<comment type="PTM">
    <text evidence="1">Is synthesized initially as an inactive proenzyme. Formation of the active enzyme involves a self-maturation process in which the active site pyruvoyl group is generated from an internal serine residue via an autocatalytic post-translational modification. Two non-identical subunits are generated from the proenzyme in this reaction, and the pyruvate is formed at the N-terminus of the alpha chain, which is derived from the carboxyl end of the proenzyme. The post-translation cleavage follows an unusual pathway, termed non-hydrolytic serinolysis, in which the side chain hydroxyl group of the serine supplies its oxygen atom to form the C-terminus of the beta chain, while the remainder of the serine residue undergoes an oxidative deamination to produce ammonia and the pyruvoyl prosthetic group on the alpha chain.</text>
</comment>
<comment type="similarity">
    <text evidence="1">Belongs to the phosphatidylserine decarboxylase family. PSD-A subfamily.</text>
</comment>
<dbReference type="EC" id="4.1.1.65" evidence="1"/>
<dbReference type="EMBL" id="CP000148">
    <property type="protein sequence ID" value="ABB31499.1"/>
    <property type="molecule type" value="Genomic_DNA"/>
</dbReference>
<dbReference type="RefSeq" id="WP_004512104.1">
    <property type="nucleotide sequence ID" value="NC_007517.1"/>
</dbReference>
<dbReference type="SMR" id="Q39W75"/>
<dbReference type="STRING" id="269799.Gmet_1263"/>
<dbReference type="DNASU" id="3739762"/>
<dbReference type="KEGG" id="gme:Gmet_1263"/>
<dbReference type="eggNOG" id="COG0688">
    <property type="taxonomic scope" value="Bacteria"/>
</dbReference>
<dbReference type="HOGENOM" id="CLU_072492_0_0_7"/>
<dbReference type="UniPathway" id="UPA00558">
    <property type="reaction ID" value="UER00616"/>
</dbReference>
<dbReference type="Proteomes" id="UP000007073">
    <property type="component" value="Chromosome"/>
</dbReference>
<dbReference type="GO" id="GO:0005886">
    <property type="term" value="C:plasma membrane"/>
    <property type="evidence" value="ECO:0007669"/>
    <property type="project" value="UniProtKB-SubCell"/>
</dbReference>
<dbReference type="GO" id="GO:0004609">
    <property type="term" value="F:phosphatidylserine decarboxylase activity"/>
    <property type="evidence" value="ECO:0007669"/>
    <property type="project" value="UniProtKB-UniRule"/>
</dbReference>
<dbReference type="GO" id="GO:0006646">
    <property type="term" value="P:phosphatidylethanolamine biosynthetic process"/>
    <property type="evidence" value="ECO:0007669"/>
    <property type="project" value="UniProtKB-UniRule"/>
</dbReference>
<dbReference type="HAMAP" id="MF_00664">
    <property type="entry name" value="PS_decarb_PSD_A"/>
    <property type="match status" value="1"/>
</dbReference>
<dbReference type="InterPro" id="IPR003817">
    <property type="entry name" value="PS_Dcarbxylase"/>
</dbReference>
<dbReference type="InterPro" id="IPR033175">
    <property type="entry name" value="PSD-A"/>
</dbReference>
<dbReference type="NCBIfam" id="NF003678">
    <property type="entry name" value="PRK05305.1-2"/>
    <property type="match status" value="1"/>
</dbReference>
<dbReference type="NCBIfam" id="NF003685">
    <property type="entry name" value="PRK05305.2-5"/>
    <property type="match status" value="1"/>
</dbReference>
<dbReference type="PANTHER" id="PTHR35809">
    <property type="entry name" value="ARCHAETIDYLSERINE DECARBOXYLASE PROENZYME-RELATED"/>
    <property type="match status" value="1"/>
</dbReference>
<dbReference type="PANTHER" id="PTHR35809:SF1">
    <property type="entry name" value="ARCHAETIDYLSERINE DECARBOXYLASE PROENZYME-RELATED"/>
    <property type="match status" value="1"/>
</dbReference>
<dbReference type="Pfam" id="PF02666">
    <property type="entry name" value="PS_Dcarbxylase"/>
    <property type="match status" value="1"/>
</dbReference>
<sequence>MRNSNTPIAAEGYPFIAGAVLIAVVLAVLGSKIPAFFFLAVFFGALTLFIVFFFRNPERTTPADENAVIAPADGVVIYLGPSREEHLGEEMTKISIFMSVFNVHVNRVPITGKVLDTFYIKGKFLDVRDDRATFENEQAGLIIETAKGMKMIVVQVAGLIARRIVCYAAKGDQLVRGKRYGLIRFGSRLDVYLPSETAVRVRMGDKTVAGETILGLLP</sequence>
<keyword id="KW-1003">Cell membrane</keyword>
<keyword id="KW-0210">Decarboxylase</keyword>
<keyword id="KW-0444">Lipid biosynthesis</keyword>
<keyword id="KW-0443">Lipid metabolism</keyword>
<keyword id="KW-0456">Lyase</keyword>
<keyword id="KW-0472">Membrane</keyword>
<keyword id="KW-0594">Phospholipid biosynthesis</keyword>
<keyword id="KW-1208">Phospholipid metabolism</keyword>
<keyword id="KW-0670">Pyruvate</keyword>
<keyword id="KW-1185">Reference proteome</keyword>
<keyword id="KW-0865">Zymogen</keyword>
<evidence type="ECO:0000255" key="1">
    <source>
        <dbReference type="HAMAP-Rule" id="MF_00664"/>
    </source>
</evidence>
<feature type="chain" id="PRO_0000262217" description="Phosphatidylserine decarboxylase beta chain" evidence="1">
    <location>
        <begin position="1"/>
        <end position="186"/>
    </location>
</feature>
<feature type="chain" id="PRO_0000262218" description="Phosphatidylserine decarboxylase alpha chain" evidence="1">
    <location>
        <begin position="187"/>
        <end position="218"/>
    </location>
</feature>
<feature type="active site" description="Schiff-base intermediate with substrate; via pyruvic acid" evidence="1">
    <location>
        <position position="187"/>
    </location>
</feature>
<feature type="site" description="Cleavage (non-hydrolytic); by autocatalysis" evidence="1">
    <location>
        <begin position="186"/>
        <end position="187"/>
    </location>
</feature>
<feature type="modified residue" description="Pyruvic acid (Ser); by autocatalysis" evidence="1">
    <location>
        <position position="187"/>
    </location>
</feature>
<reference key="1">
    <citation type="journal article" date="2009" name="BMC Microbiol.">
        <title>The genome sequence of Geobacter metallireducens: features of metabolism, physiology and regulation common and dissimilar to Geobacter sulfurreducens.</title>
        <authorList>
            <person name="Aklujkar M."/>
            <person name="Krushkal J."/>
            <person name="DiBartolo G."/>
            <person name="Lapidus A."/>
            <person name="Land M.L."/>
            <person name="Lovley D.R."/>
        </authorList>
    </citation>
    <scope>NUCLEOTIDE SEQUENCE [LARGE SCALE GENOMIC DNA]</scope>
    <source>
        <strain>ATCC 53774 / DSM 7210 / GS-15</strain>
    </source>
</reference>
<gene>
    <name evidence="1" type="primary">psd</name>
    <name type="ordered locus">Gmet_1263</name>
</gene>
<accession>Q39W75</accession>
<proteinExistence type="inferred from homology"/>
<protein>
    <recommendedName>
        <fullName evidence="1">Phosphatidylserine decarboxylase proenzyme</fullName>
        <ecNumber evidence="1">4.1.1.65</ecNumber>
    </recommendedName>
    <component>
        <recommendedName>
            <fullName evidence="1">Phosphatidylserine decarboxylase alpha chain</fullName>
        </recommendedName>
    </component>
    <component>
        <recommendedName>
            <fullName evidence="1">Phosphatidylserine decarboxylase beta chain</fullName>
        </recommendedName>
    </component>
</protein>
<name>PSD_GEOMG</name>
<organism>
    <name type="scientific">Geobacter metallireducens (strain ATCC 53774 / DSM 7210 / GS-15)</name>
    <dbReference type="NCBI Taxonomy" id="269799"/>
    <lineage>
        <taxon>Bacteria</taxon>
        <taxon>Pseudomonadati</taxon>
        <taxon>Thermodesulfobacteriota</taxon>
        <taxon>Desulfuromonadia</taxon>
        <taxon>Geobacterales</taxon>
        <taxon>Geobacteraceae</taxon>
        <taxon>Geobacter</taxon>
    </lineage>
</organism>